<reference key="1">
    <citation type="journal article" date="2009" name="PLoS ONE">
        <title>Salmonella paratyphi C: genetic divergence from Salmonella choleraesuis and pathogenic convergence with Salmonella typhi.</title>
        <authorList>
            <person name="Liu W.-Q."/>
            <person name="Feng Y."/>
            <person name="Wang Y."/>
            <person name="Zou Q.-H."/>
            <person name="Chen F."/>
            <person name="Guo J.-T."/>
            <person name="Peng Y.-H."/>
            <person name="Jin Y."/>
            <person name="Li Y.-G."/>
            <person name="Hu S.-N."/>
            <person name="Johnston R.N."/>
            <person name="Liu G.-R."/>
            <person name="Liu S.-L."/>
        </authorList>
    </citation>
    <scope>NUCLEOTIDE SEQUENCE [LARGE SCALE GENOMIC DNA]</scope>
    <source>
        <strain>RKS4594</strain>
    </source>
</reference>
<sequence length="478" mass="53769">MARKTLRARRFFSLIFPFFFITSVYAEQTPVSAKTVTVEAKNETFAPQHPDQYQSWKATSEQSAREDALAEDPRLVILWAGYPFSRDYNKPRGHAYAVTDVRETLRTGAPKTAEDGPLPMACWSCKSPDVARLIQQEGEDGYFHGKWARGGPEIVNDLGCADCHNTASDDFAQGKPALTLSRPYAERAMEAIGKPFEKAGRFDQQSMVCGQCHVEYYFDGKNKAVKFPWDEGMKVENMEQYYDAIAFSDWTNSLSRTPMLKAQHPEYETWSAGIHGKNNVTCIDCHMPKVQNAEGKLYTDHKIGNPFDNFAQTCANCHTQDKASLQKVVAERKQAIHDLKIKVEDQLVHAHFEAKAAWDAGATDAEMKPILNDIRHAQWRWDLAIASHGIHMHAPEEGLRMLGSAMDKAADARTKLARLLATKGITHEIPLPDISTKEKAQKAIGLNMQQINAEKQDFLKTVVPQWEDQARKNGLLSQ</sequence>
<gene>
    <name evidence="1" type="primary">nrfA</name>
    <name type="ordered locus">SPC_4340</name>
</gene>
<evidence type="ECO:0000255" key="1">
    <source>
        <dbReference type="HAMAP-Rule" id="MF_01182"/>
    </source>
</evidence>
<keyword id="KW-0106">Calcium</keyword>
<keyword id="KW-0249">Electron transport</keyword>
<keyword id="KW-0349">Heme</keyword>
<keyword id="KW-0408">Iron</keyword>
<keyword id="KW-0479">Metal-binding</keyword>
<keyword id="KW-0560">Oxidoreductase</keyword>
<keyword id="KW-0574">Periplasm</keyword>
<keyword id="KW-0732">Signal</keyword>
<keyword id="KW-0813">Transport</keyword>
<accession>C0Q554</accession>
<feature type="signal peptide" evidence="1">
    <location>
        <begin position="1"/>
        <end position="26"/>
    </location>
</feature>
<feature type="chain" id="PRO_1000164442" description="Cytochrome c-552">
    <location>
        <begin position="27"/>
        <end position="478"/>
    </location>
</feature>
<feature type="binding site" description="axial binding residue" evidence="1">
    <location>
        <position position="94"/>
    </location>
    <ligand>
        <name>heme c</name>
        <dbReference type="ChEBI" id="CHEBI:61717"/>
        <label>3</label>
    </ligand>
    <ligandPart>
        <name>Fe</name>
        <dbReference type="ChEBI" id="CHEBI:18248"/>
    </ligandPart>
</feature>
<feature type="binding site" description="covalent" evidence="1">
    <location>
        <position position="122"/>
    </location>
    <ligand>
        <name>heme</name>
        <dbReference type="ChEBI" id="CHEBI:30413"/>
        <label>1</label>
    </ligand>
</feature>
<feature type="binding site" description="covalent" evidence="1">
    <location>
        <position position="125"/>
    </location>
    <ligand>
        <name>heme</name>
        <dbReference type="ChEBI" id="CHEBI:30413"/>
        <label>1</label>
    </ligand>
</feature>
<feature type="binding site" description="axial binding residue" evidence="1">
    <location>
        <position position="126"/>
    </location>
    <ligand>
        <name>heme</name>
        <dbReference type="ChEBI" id="CHEBI:30413"/>
        <label>1</label>
    </ligand>
    <ligandPart>
        <name>Fe</name>
        <dbReference type="ChEBI" id="CHEBI:18248"/>
    </ligandPart>
</feature>
<feature type="binding site" description="covalent" evidence="1">
    <location>
        <position position="160"/>
    </location>
    <ligand>
        <name>heme c</name>
        <dbReference type="ChEBI" id="CHEBI:61717"/>
        <label>2</label>
    </ligand>
</feature>
<feature type="binding site" description="covalent" evidence="1">
    <location>
        <position position="163"/>
    </location>
    <ligand>
        <name>heme c</name>
        <dbReference type="ChEBI" id="CHEBI:61717"/>
        <label>2</label>
    </ligand>
</feature>
<feature type="binding site" description="axial binding residue" evidence="1">
    <location>
        <position position="164"/>
    </location>
    <ligand>
        <name>heme c</name>
        <dbReference type="ChEBI" id="CHEBI:61717"/>
        <label>2</label>
    </ligand>
    <ligandPart>
        <name>Fe</name>
        <dbReference type="ChEBI" id="CHEBI:18248"/>
    </ligandPart>
</feature>
<feature type="binding site" description="covalent" evidence="1">
    <location>
        <position position="209"/>
    </location>
    <ligand>
        <name>heme c</name>
        <dbReference type="ChEBI" id="CHEBI:61717"/>
        <label>3</label>
    </ligand>
</feature>
<feature type="binding site" description="covalent" evidence="1">
    <location>
        <position position="212"/>
    </location>
    <ligand>
        <name>heme c</name>
        <dbReference type="ChEBI" id="CHEBI:61717"/>
        <label>3</label>
    </ligand>
</feature>
<feature type="binding site" description="axial binding residue" evidence="1">
    <location>
        <position position="213"/>
    </location>
    <ligand>
        <name>heme c</name>
        <dbReference type="ChEBI" id="CHEBI:61717"/>
        <label>3</label>
    </ligand>
    <ligandPart>
        <name>Fe</name>
        <dbReference type="ChEBI" id="CHEBI:18248"/>
    </ligandPart>
</feature>
<feature type="binding site" evidence="1">
    <location>
        <position position="215"/>
    </location>
    <ligand>
        <name>Ca(2+)</name>
        <dbReference type="ChEBI" id="CHEBI:29108"/>
    </ligand>
</feature>
<feature type="binding site" evidence="1">
    <location>
        <position position="216"/>
    </location>
    <ligand>
        <name>Ca(2+)</name>
        <dbReference type="ChEBI" id="CHEBI:29108"/>
    </ligand>
</feature>
<feature type="binding site" evidence="1">
    <location>
        <position position="216"/>
    </location>
    <ligand>
        <name>substrate</name>
    </ligand>
</feature>
<feature type="binding site" evidence="1">
    <location>
        <position position="261"/>
    </location>
    <ligand>
        <name>Ca(2+)</name>
        <dbReference type="ChEBI" id="CHEBI:29108"/>
    </ligand>
</feature>
<feature type="binding site" evidence="1">
    <location>
        <position position="263"/>
    </location>
    <ligand>
        <name>Ca(2+)</name>
        <dbReference type="ChEBI" id="CHEBI:29108"/>
    </ligand>
</feature>
<feature type="binding site" evidence="1">
    <location>
        <position position="264"/>
    </location>
    <ligand>
        <name>substrate</name>
    </ligand>
</feature>
<feature type="binding site" description="axial binding residue" evidence="1">
    <location>
        <position position="275"/>
    </location>
    <ligand>
        <name>heme c</name>
        <dbReference type="ChEBI" id="CHEBI:61717"/>
        <label>5</label>
    </ligand>
    <ligandPart>
        <name>Fe</name>
        <dbReference type="ChEBI" id="CHEBI:18248"/>
    </ligandPart>
</feature>
<feature type="binding site" description="covalent" evidence="1">
    <location>
        <position position="282"/>
    </location>
    <ligand>
        <name>heme c</name>
        <dbReference type="ChEBI" id="CHEBI:61717"/>
        <label>4</label>
    </ligand>
</feature>
<feature type="binding site" description="covalent" evidence="1">
    <location>
        <position position="285"/>
    </location>
    <ligand>
        <name>heme c</name>
        <dbReference type="ChEBI" id="CHEBI:61717"/>
        <label>4</label>
    </ligand>
</feature>
<feature type="binding site" description="axial binding residue" evidence="1">
    <location>
        <position position="286"/>
    </location>
    <ligand>
        <name>heme c</name>
        <dbReference type="ChEBI" id="CHEBI:61717"/>
        <label>4</label>
    </ligand>
    <ligandPart>
        <name>Fe</name>
        <dbReference type="ChEBI" id="CHEBI:18248"/>
    </ligandPart>
</feature>
<feature type="binding site" description="axial binding residue" evidence="1">
    <location>
        <position position="301"/>
    </location>
    <ligand>
        <name>heme c</name>
        <dbReference type="ChEBI" id="CHEBI:61717"/>
        <label>2</label>
    </ligand>
    <ligandPart>
        <name>Fe</name>
        <dbReference type="ChEBI" id="CHEBI:18248"/>
    </ligandPart>
</feature>
<feature type="binding site" description="covalent" evidence="1">
    <location>
        <position position="314"/>
    </location>
    <ligand>
        <name>heme c</name>
        <dbReference type="ChEBI" id="CHEBI:61717"/>
        <label>5</label>
    </ligand>
</feature>
<feature type="binding site" description="covalent" evidence="1">
    <location>
        <position position="317"/>
    </location>
    <ligand>
        <name>heme c</name>
        <dbReference type="ChEBI" id="CHEBI:61717"/>
        <label>5</label>
    </ligand>
</feature>
<feature type="binding site" description="axial binding residue" evidence="1">
    <location>
        <position position="318"/>
    </location>
    <ligand>
        <name>heme c</name>
        <dbReference type="ChEBI" id="CHEBI:61717"/>
        <label>5</label>
    </ligand>
    <ligandPart>
        <name>Fe</name>
        <dbReference type="ChEBI" id="CHEBI:18248"/>
    </ligandPart>
</feature>
<feature type="binding site" description="axial binding residue" evidence="1">
    <location>
        <position position="393"/>
    </location>
    <ligand>
        <name>heme c</name>
        <dbReference type="ChEBI" id="CHEBI:61717"/>
        <label>4</label>
    </ligand>
    <ligandPart>
        <name>Fe</name>
        <dbReference type="ChEBI" id="CHEBI:18248"/>
    </ligandPart>
</feature>
<comment type="function">
    <text evidence="1">Catalyzes the reduction of nitrite to ammonia, consuming six electrons in the process.</text>
</comment>
<comment type="catalytic activity">
    <reaction evidence="1">
        <text>6 Fe(III)-[cytochrome c] + NH4(+) + 2 H2O = 6 Fe(II)-[cytochrome c] + nitrite + 8 H(+)</text>
        <dbReference type="Rhea" id="RHEA:13089"/>
        <dbReference type="Rhea" id="RHEA-COMP:10350"/>
        <dbReference type="Rhea" id="RHEA-COMP:14399"/>
        <dbReference type="ChEBI" id="CHEBI:15377"/>
        <dbReference type="ChEBI" id="CHEBI:15378"/>
        <dbReference type="ChEBI" id="CHEBI:16301"/>
        <dbReference type="ChEBI" id="CHEBI:28938"/>
        <dbReference type="ChEBI" id="CHEBI:29033"/>
        <dbReference type="ChEBI" id="CHEBI:29034"/>
        <dbReference type="EC" id="1.7.2.2"/>
    </reaction>
</comment>
<comment type="cofactor">
    <cofactor evidence="1">
        <name>Ca(2+)</name>
        <dbReference type="ChEBI" id="CHEBI:29108"/>
    </cofactor>
    <text evidence="1">Binds 1 Ca(2+) ion per monomer.</text>
</comment>
<comment type="cofactor">
    <cofactor evidence="1">
        <name>heme c</name>
        <dbReference type="ChEBI" id="CHEBI:61717"/>
    </cofactor>
    <text evidence="1">Binds 5 heme c groups covalently per monomer.</text>
</comment>
<comment type="pathway">
    <text evidence="1">Nitrogen metabolism; nitrate reduction (assimilation).</text>
</comment>
<comment type="subcellular location">
    <subcellularLocation>
        <location evidence="1">Periplasm</location>
    </subcellularLocation>
</comment>
<comment type="similarity">
    <text evidence="1">Belongs to the cytochrome c-552 family.</text>
</comment>
<organism>
    <name type="scientific">Salmonella paratyphi C (strain RKS4594)</name>
    <dbReference type="NCBI Taxonomy" id="476213"/>
    <lineage>
        <taxon>Bacteria</taxon>
        <taxon>Pseudomonadati</taxon>
        <taxon>Pseudomonadota</taxon>
        <taxon>Gammaproteobacteria</taxon>
        <taxon>Enterobacterales</taxon>
        <taxon>Enterobacteriaceae</taxon>
        <taxon>Salmonella</taxon>
    </lineage>
</organism>
<protein>
    <recommendedName>
        <fullName evidence="1">Cytochrome c-552</fullName>
        <ecNumber evidence="1">1.7.2.2</ecNumber>
    </recommendedName>
    <alternativeName>
        <fullName evidence="1">Ammonia-forming cytochrome c nitrite reductase</fullName>
        <shortName evidence="1">Cytochrome c nitrite reductase</shortName>
    </alternativeName>
</protein>
<proteinExistence type="inferred from homology"/>
<dbReference type="EC" id="1.7.2.2" evidence="1"/>
<dbReference type="EMBL" id="CP000857">
    <property type="protein sequence ID" value="ACN48401.1"/>
    <property type="molecule type" value="Genomic_DNA"/>
</dbReference>
<dbReference type="RefSeq" id="WP_000101788.1">
    <property type="nucleotide sequence ID" value="NC_012125.1"/>
</dbReference>
<dbReference type="SMR" id="C0Q554"/>
<dbReference type="KEGG" id="sei:SPC_4340"/>
<dbReference type="HOGENOM" id="CLU_035040_1_0_6"/>
<dbReference type="UniPathway" id="UPA00653"/>
<dbReference type="Proteomes" id="UP000001599">
    <property type="component" value="Chromosome"/>
</dbReference>
<dbReference type="GO" id="GO:0030288">
    <property type="term" value="C:outer membrane-bounded periplasmic space"/>
    <property type="evidence" value="ECO:0007669"/>
    <property type="project" value="TreeGrafter"/>
</dbReference>
<dbReference type="GO" id="GO:0005509">
    <property type="term" value="F:calcium ion binding"/>
    <property type="evidence" value="ECO:0007669"/>
    <property type="project" value="UniProtKB-UniRule"/>
</dbReference>
<dbReference type="GO" id="GO:0020037">
    <property type="term" value="F:heme binding"/>
    <property type="evidence" value="ECO:0007669"/>
    <property type="project" value="InterPro"/>
</dbReference>
<dbReference type="GO" id="GO:0005506">
    <property type="term" value="F:iron ion binding"/>
    <property type="evidence" value="ECO:0007669"/>
    <property type="project" value="UniProtKB-UniRule"/>
</dbReference>
<dbReference type="GO" id="GO:0042279">
    <property type="term" value="F:nitrite reductase (cytochrome, ammonia-forming) activity"/>
    <property type="evidence" value="ECO:0007669"/>
    <property type="project" value="UniProtKB-UniRule"/>
</dbReference>
<dbReference type="GO" id="GO:0019645">
    <property type="term" value="P:anaerobic electron transport chain"/>
    <property type="evidence" value="ECO:0007669"/>
    <property type="project" value="TreeGrafter"/>
</dbReference>
<dbReference type="GO" id="GO:0042128">
    <property type="term" value="P:nitrate assimilation"/>
    <property type="evidence" value="ECO:0007669"/>
    <property type="project" value="UniProtKB-UniRule"/>
</dbReference>
<dbReference type="CDD" id="cd00548">
    <property type="entry name" value="NrfA-like"/>
    <property type="match status" value="1"/>
</dbReference>
<dbReference type="FunFam" id="1.10.1130.10:FF:000002">
    <property type="entry name" value="Cytochrome c-552"/>
    <property type="match status" value="1"/>
</dbReference>
<dbReference type="FunFam" id="1.20.140.10:FF:000014">
    <property type="entry name" value="Cytochrome c-552"/>
    <property type="match status" value="1"/>
</dbReference>
<dbReference type="Gene3D" id="1.20.140.10">
    <property type="entry name" value="Butyryl-CoA Dehydrogenase, subunit A, domain 3"/>
    <property type="match status" value="1"/>
</dbReference>
<dbReference type="Gene3D" id="1.10.1130.10">
    <property type="entry name" value="Flavocytochrome C3, Chain A"/>
    <property type="match status" value="1"/>
</dbReference>
<dbReference type="HAMAP" id="MF_01182">
    <property type="entry name" value="Cytochrom_C552"/>
    <property type="match status" value="1"/>
</dbReference>
<dbReference type="InterPro" id="IPR003321">
    <property type="entry name" value="Cyt_c552"/>
</dbReference>
<dbReference type="InterPro" id="IPR017570">
    <property type="entry name" value="Cyt_c_NO2Rdtase_formate-dep"/>
</dbReference>
<dbReference type="InterPro" id="IPR036280">
    <property type="entry name" value="Multihaem_cyt_sf"/>
</dbReference>
<dbReference type="NCBIfam" id="TIGR03152">
    <property type="entry name" value="cyto_c552_HCOOH"/>
    <property type="match status" value="1"/>
</dbReference>
<dbReference type="NCBIfam" id="NF008339">
    <property type="entry name" value="PRK11125.1"/>
    <property type="match status" value="1"/>
</dbReference>
<dbReference type="PANTHER" id="PTHR30633:SF0">
    <property type="entry name" value="CYTOCHROME C-552"/>
    <property type="match status" value="1"/>
</dbReference>
<dbReference type="PANTHER" id="PTHR30633">
    <property type="entry name" value="CYTOCHROME C-552 RESPIRATORY NITRITE REDUCTASE"/>
    <property type="match status" value="1"/>
</dbReference>
<dbReference type="Pfam" id="PF02335">
    <property type="entry name" value="Cytochrom_C552"/>
    <property type="match status" value="1"/>
</dbReference>
<dbReference type="PIRSF" id="PIRSF000243">
    <property type="entry name" value="Cyt_c552"/>
    <property type="match status" value="1"/>
</dbReference>
<dbReference type="SUPFAM" id="SSF48695">
    <property type="entry name" value="Multiheme cytochromes"/>
    <property type="match status" value="1"/>
</dbReference>
<dbReference type="PROSITE" id="PS51008">
    <property type="entry name" value="MULTIHEME_CYTC"/>
    <property type="match status" value="1"/>
</dbReference>
<name>NRFA_SALPC</name>